<name>IHFA_RHOPB</name>
<proteinExistence type="inferred from homology"/>
<gene>
    <name evidence="1" type="primary">ihfA</name>
    <name evidence="1" type="synonym">himA</name>
    <name type="ordered locus">RPC_2677</name>
</gene>
<sequence length="108" mass="11759">MTGTGKTVTRVDLCEAVYQKVGLSRTESSAFVELVLKEITDCLEKGETVKLSSFGSFMVRKKGQRIGRNPKTGTEVPISPRRVMVFKPSAILKQRINANGAAAPTKTD</sequence>
<organism>
    <name type="scientific">Rhodopseudomonas palustris (strain BisB18)</name>
    <dbReference type="NCBI Taxonomy" id="316056"/>
    <lineage>
        <taxon>Bacteria</taxon>
        <taxon>Pseudomonadati</taxon>
        <taxon>Pseudomonadota</taxon>
        <taxon>Alphaproteobacteria</taxon>
        <taxon>Hyphomicrobiales</taxon>
        <taxon>Nitrobacteraceae</taxon>
        <taxon>Rhodopseudomonas</taxon>
    </lineage>
</organism>
<feature type="chain" id="PRO_1000060562" description="Integration host factor subunit alpha">
    <location>
        <begin position="1"/>
        <end position="108"/>
    </location>
</feature>
<evidence type="ECO:0000255" key="1">
    <source>
        <dbReference type="HAMAP-Rule" id="MF_00380"/>
    </source>
</evidence>
<protein>
    <recommendedName>
        <fullName evidence="1">Integration host factor subunit alpha</fullName>
        <shortName evidence="1">IHF-alpha</shortName>
    </recommendedName>
</protein>
<accession>Q214G0</accession>
<reference key="1">
    <citation type="submission" date="2006-03" db="EMBL/GenBank/DDBJ databases">
        <title>Complete sequence of Rhodopseudomonas palustris BisB18.</title>
        <authorList>
            <consortium name="US DOE Joint Genome Institute"/>
            <person name="Copeland A."/>
            <person name="Lucas S."/>
            <person name="Lapidus A."/>
            <person name="Barry K."/>
            <person name="Detter J.C."/>
            <person name="Glavina del Rio T."/>
            <person name="Hammon N."/>
            <person name="Israni S."/>
            <person name="Dalin E."/>
            <person name="Tice H."/>
            <person name="Pitluck S."/>
            <person name="Chain P."/>
            <person name="Malfatti S."/>
            <person name="Shin M."/>
            <person name="Vergez L."/>
            <person name="Schmutz J."/>
            <person name="Larimer F."/>
            <person name="Land M."/>
            <person name="Hauser L."/>
            <person name="Pelletier D.A."/>
            <person name="Kyrpides N."/>
            <person name="Anderson I."/>
            <person name="Oda Y."/>
            <person name="Harwood C.S."/>
            <person name="Richardson P."/>
        </authorList>
    </citation>
    <scope>NUCLEOTIDE SEQUENCE [LARGE SCALE GENOMIC DNA]</scope>
    <source>
        <strain>BisB18</strain>
    </source>
</reference>
<dbReference type="EMBL" id="CP000301">
    <property type="protein sequence ID" value="ABD88226.1"/>
    <property type="molecule type" value="Genomic_DNA"/>
</dbReference>
<dbReference type="SMR" id="Q214G0"/>
<dbReference type="STRING" id="316056.RPC_2677"/>
<dbReference type="KEGG" id="rpc:RPC_2677"/>
<dbReference type="eggNOG" id="COG0776">
    <property type="taxonomic scope" value="Bacteria"/>
</dbReference>
<dbReference type="HOGENOM" id="CLU_105066_1_1_5"/>
<dbReference type="OrthoDB" id="9797747at2"/>
<dbReference type="GO" id="GO:0005829">
    <property type="term" value="C:cytosol"/>
    <property type="evidence" value="ECO:0007669"/>
    <property type="project" value="TreeGrafter"/>
</dbReference>
<dbReference type="GO" id="GO:0003677">
    <property type="term" value="F:DNA binding"/>
    <property type="evidence" value="ECO:0007669"/>
    <property type="project" value="UniProtKB-UniRule"/>
</dbReference>
<dbReference type="GO" id="GO:0030527">
    <property type="term" value="F:structural constituent of chromatin"/>
    <property type="evidence" value="ECO:0007669"/>
    <property type="project" value="InterPro"/>
</dbReference>
<dbReference type="GO" id="GO:0006310">
    <property type="term" value="P:DNA recombination"/>
    <property type="evidence" value="ECO:0007669"/>
    <property type="project" value="UniProtKB-UniRule"/>
</dbReference>
<dbReference type="GO" id="GO:0009893">
    <property type="term" value="P:positive regulation of metabolic process"/>
    <property type="evidence" value="ECO:0007669"/>
    <property type="project" value="UniProtKB-ARBA"/>
</dbReference>
<dbReference type="GO" id="GO:0006355">
    <property type="term" value="P:regulation of DNA-templated transcription"/>
    <property type="evidence" value="ECO:0007669"/>
    <property type="project" value="UniProtKB-UniRule"/>
</dbReference>
<dbReference type="GO" id="GO:0006417">
    <property type="term" value="P:regulation of translation"/>
    <property type="evidence" value="ECO:0007669"/>
    <property type="project" value="UniProtKB-UniRule"/>
</dbReference>
<dbReference type="CDD" id="cd13835">
    <property type="entry name" value="IHF_A"/>
    <property type="match status" value="1"/>
</dbReference>
<dbReference type="FunFam" id="4.10.520.10:FF:000010">
    <property type="entry name" value="Integration host factor subunit alpha"/>
    <property type="match status" value="1"/>
</dbReference>
<dbReference type="Gene3D" id="4.10.520.10">
    <property type="entry name" value="IHF-like DNA-binding proteins"/>
    <property type="match status" value="1"/>
</dbReference>
<dbReference type="HAMAP" id="MF_00380">
    <property type="entry name" value="IHF_alpha"/>
    <property type="match status" value="1"/>
</dbReference>
<dbReference type="InterPro" id="IPR000119">
    <property type="entry name" value="Hist_DNA-bd"/>
</dbReference>
<dbReference type="InterPro" id="IPR020816">
    <property type="entry name" value="Histone-like_DNA-bd_CS"/>
</dbReference>
<dbReference type="InterPro" id="IPR010992">
    <property type="entry name" value="IHF-like_DNA-bd_dom_sf"/>
</dbReference>
<dbReference type="InterPro" id="IPR005684">
    <property type="entry name" value="IHF_alpha"/>
</dbReference>
<dbReference type="NCBIfam" id="TIGR00987">
    <property type="entry name" value="himA"/>
    <property type="match status" value="1"/>
</dbReference>
<dbReference type="NCBIfam" id="NF001401">
    <property type="entry name" value="PRK00285.1"/>
    <property type="match status" value="1"/>
</dbReference>
<dbReference type="PANTHER" id="PTHR33175">
    <property type="entry name" value="DNA-BINDING PROTEIN HU"/>
    <property type="match status" value="1"/>
</dbReference>
<dbReference type="PANTHER" id="PTHR33175:SF2">
    <property type="entry name" value="INTEGRATION HOST FACTOR SUBUNIT ALPHA"/>
    <property type="match status" value="1"/>
</dbReference>
<dbReference type="Pfam" id="PF00216">
    <property type="entry name" value="Bac_DNA_binding"/>
    <property type="match status" value="1"/>
</dbReference>
<dbReference type="PRINTS" id="PR01727">
    <property type="entry name" value="DNABINDINGHU"/>
</dbReference>
<dbReference type="SMART" id="SM00411">
    <property type="entry name" value="BHL"/>
    <property type="match status" value="1"/>
</dbReference>
<dbReference type="SUPFAM" id="SSF47729">
    <property type="entry name" value="IHF-like DNA-binding proteins"/>
    <property type="match status" value="1"/>
</dbReference>
<dbReference type="PROSITE" id="PS00045">
    <property type="entry name" value="HISTONE_LIKE"/>
    <property type="match status" value="1"/>
</dbReference>
<comment type="function">
    <text evidence="1">This protein is one of the two subunits of integration host factor, a specific DNA-binding protein that functions in genetic recombination as well as in transcriptional and translational control.</text>
</comment>
<comment type="subunit">
    <text evidence="1">Heterodimer of an alpha and a beta chain.</text>
</comment>
<comment type="similarity">
    <text evidence="1">Belongs to the bacterial histone-like protein family.</text>
</comment>
<keyword id="KW-0233">DNA recombination</keyword>
<keyword id="KW-0238">DNA-binding</keyword>
<keyword id="KW-0804">Transcription</keyword>
<keyword id="KW-0805">Transcription regulation</keyword>
<keyword id="KW-0810">Translation regulation</keyword>